<comment type="function">
    <text evidence="1">Necessary for normal cell division and for the maintenance of normal septation.</text>
</comment>
<comment type="cofactor">
    <cofactor evidence="1">
        <name>Mg(2+)</name>
        <dbReference type="ChEBI" id="CHEBI:18420"/>
    </cofactor>
</comment>
<comment type="similarity">
    <text evidence="1">Belongs to the TRAFAC class TrmE-Era-EngA-EngB-Septin-like GTPase superfamily. EngB GTPase family.</text>
</comment>
<sequence>MNSLDYNKTNFLKSYSKITDIDIQNGIEIAFIGYSNTGKSSAINALTNQKKLARFSKTPGRTQLINFFEVVSGFRIVDLPGYGYSQAPLLVRSKWQKKVYDYLEKREQIKLFVLLMDIRYPLKKLDQKIISIAVQKKISILVLLTKCDKIKINHQKNQADMVFKKLNVLLDSFEIILFSSYKKIGIEKLKLSLNSSYKKHFILNR</sequence>
<evidence type="ECO:0000255" key="1">
    <source>
        <dbReference type="HAMAP-Rule" id="MF_00321"/>
    </source>
</evidence>
<accession>B8D9L0</accession>
<protein>
    <recommendedName>
        <fullName evidence="1">Probable GTP-binding protein EngB</fullName>
    </recommendedName>
</protein>
<name>ENGB_BUCA5</name>
<keyword id="KW-0131">Cell cycle</keyword>
<keyword id="KW-0132">Cell division</keyword>
<keyword id="KW-0342">GTP-binding</keyword>
<keyword id="KW-0460">Magnesium</keyword>
<keyword id="KW-0479">Metal-binding</keyword>
<keyword id="KW-0547">Nucleotide-binding</keyword>
<keyword id="KW-0717">Septation</keyword>
<organism>
    <name type="scientific">Buchnera aphidicola subsp. Acyrthosiphon pisum (strain 5A)</name>
    <dbReference type="NCBI Taxonomy" id="563178"/>
    <lineage>
        <taxon>Bacteria</taxon>
        <taxon>Pseudomonadati</taxon>
        <taxon>Pseudomonadota</taxon>
        <taxon>Gammaproteobacteria</taxon>
        <taxon>Enterobacterales</taxon>
        <taxon>Erwiniaceae</taxon>
        <taxon>Buchnera</taxon>
    </lineage>
</organism>
<proteinExistence type="inferred from homology"/>
<dbReference type="EMBL" id="CP001161">
    <property type="protein sequence ID" value="ACL30781.1"/>
    <property type="molecule type" value="Genomic_DNA"/>
</dbReference>
<dbReference type="SMR" id="B8D9L0"/>
<dbReference type="KEGG" id="bap:BUAP5A_425"/>
<dbReference type="HOGENOM" id="CLU_033732_1_0_6"/>
<dbReference type="OrthoDB" id="9804921at2"/>
<dbReference type="Proteomes" id="UP000006904">
    <property type="component" value="Chromosome"/>
</dbReference>
<dbReference type="GO" id="GO:0005829">
    <property type="term" value="C:cytosol"/>
    <property type="evidence" value="ECO:0007669"/>
    <property type="project" value="TreeGrafter"/>
</dbReference>
<dbReference type="GO" id="GO:0005525">
    <property type="term" value="F:GTP binding"/>
    <property type="evidence" value="ECO:0007669"/>
    <property type="project" value="UniProtKB-UniRule"/>
</dbReference>
<dbReference type="GO" id="GO:0046872">
    <property type="term" value="F:metal ion binding"/>
    <property type="evidence" value="ECO:0007669"/>
    <property type="project" value="UniProtKB-KW"/>
</dbReference>
<dbReference type="GO" id="GO:0000917">
    <property type="term" value="P:division septum assembly"/>
    <property type="evidence" value="ECO:0007669"/>
    <property type="project" value="UniProtKB-KW"/>
</dbReference>
<dbReference type="CDD" id="cd01876">
    <property type="entry name" value="YihA_EngB"/>
    <property type="match status" value="1"/>
</dbReference>
<dbReference type="FunFam" id="3.40.50.300:FF:000098">
    <property type="entry name" value="Probable GTP-binding protein EngB"/>
    <property type="match status" value="1"/>
</dbReference>
<dbReference type="Gene3D" id="3.40.50.300">
    <property type="entry name" value="P-loop containing nucleotide triphosphate hydrolases"/>
    <property type="match status" value="1"/>
</dbReference>
<dbReference type="HAMAP" id="MF_00321">
    <property type="entry name" value="GTPase_EngB"/>
    <property type="match status" value="1"/>
</dbReference>
<dbReference type="InterPro" id="IPR030393">
    <property type="entry name" value="G_ENGB_dom"/>
</dbReference>
<dbReference type="InterPro" id="IPR006073">
    <property type="entry name" value="GTP-bd"/>
</dbReference>
<dbReference type="InterPro" id="IPR019987">
    <property type="entry name" value="GTP-bd_ribosome_bio_YsxC"/>
</dbReference>
<dbReference type="InterPro" id="IPR027417">
    <property type="entry name" value="P-loop_NTPase"/>
</dbReference>
<dbReference type="NCBIfam" id="TIGR03598">
    <property type="entry name" value="GTPase_YsxC"/>
    <property type="match status" value="1"/>
</dbReference>
<dbReference type="PANTHER" id="PTHR11649:SF13">
    <property type="entry name" value="ENGB-TYPE G DOMAIN-CONTAINING PROTEIN"/>
    <property type="match status" value="1"/>
</dbReference>
<dbReference type="PANTHER" id="PTHR11649">
    <property type="entry name" value="MSS1/TRME-RELATED GTP-BINDING PROTEIN"/>
    <property type="match status" value="1"/>
</dbReference>
<dbReference type="Pfam" id="PF01926">
    <property type="entry name" value="MMR_HSR1"/>
    <property type="match status" value="1"/>
</dbReference>
<dbReference type="SUPFAM" id="SSF52540">
    <property type="entry name" value="P-loop containing nucleoside triphosphate hydrolases"/>
    <property type="match status" value="1"/>
</dbReference>
<dbReference type="PROSITE" id="PS51706">
    <property type="entry name" value="G_ENGB"/>
    <property type="match status" value="1"/>
</dbReference>
<gene>
    <name evidence="1" type="primary">engB</name>
    <name type="ordered locus">BUAP5A_425</name>
</gene>
<reference key="1">
    <citation type="journal article" date="2009" name="Science">
        <title>The dynamics and time scale of ongoing genomic erosion in symbiotic bacteria.</title>
        <authorList>
            <person name="Moran N.A."/>
            <person name="McLaughlin H.J."/>
            <person name="Sorek R."/>
        </authorList>
    </citation>
    <scope>NUCLEOTIDE SEQUENCE [LARGE SCALE GENOMIC DNA]</scope>
    <source>
        <strain>5A</strain>
    </source>
</reference>
<feature type="chain" id="PRO_1000133047" description="Probable GTP-binding protein EngB">
    <location>
        <begin position="1"/>
        <end position="205"/>
    </location>
</feature>
<feature type="domain" description="EngB-type G" evidence="1">
    <location>
        <begin position="25"/>
        <end position="199"/>
    </location>
</feature>
<feature type="binding site" evidence="1">
    <location>
        <begin position="33"/>
        <end position="40"/>
    </location>
    <ligand>
        <name>GTP</name>
        <dbReference type="ChEBI" id="CHEBI:37565"/>
    </ligand>
</feature>
<feature type="binding site" evidence="1">
    <location>
        <position position="40"/>
    </location>
    <ligand>
        <name>Mg(2+)</name>
        <dbReference type="ChEBI" id="CHEBI:18420"/>
    </ligand>
</feature>
<feature type="binding site" evidence="1">
    <location>
        <begin position="60"/>
        <end position="64"/>
    </location>
    <ligand>
        <name>GTP</name>
        <dbReference type="ChEBI" id="CHEBI:37565"/>
    </ligand>
</feature>
<feature type="binding site" evidence="1">
    <location>
        <position position="62"/>
    </location>
    <ligand>
        <name>Mg(2+)</name>
        <dbReference type="ChEBI" id="CHEBI:18420"/>
    </ligand>
</feature>
<feature type="binding site" evidence="1">
    <location>
        <begin position="78"/>
        <end position="81"/>
    </location>
    <ligand>
        <name>GTP</name>
        <dbReference type="ChEBI" id="CHEBI:37565"/>
    </ligand>
</feature>
<feature type="binding site" evidence="1">
    <location>
        <begin position="145"/>
        <end position="148"/>
    </location>
    <ligand>
        <name>GTP</name>
        <dbReference type="ChEBI" id="CHEBI:37565"/>
    </ligand>
</feature>
<feature type="binding site" evidence="1">
    <location>
        <begin position="178"/>
        <end position="180"/>
    </location>
    <ligand>
        <name>GTP</name>
        <dbReference type="ChEBI" id="CHEBI:37565"/>
    </ligand>
</feature>